<evidence type="ECO:0000255" key="1">
    <source>
        <dbReference type="HAMAP-Rule" id="MF_00093"/>
    </source>
</evidence>
<evidence type="ECO:0000256" key="2">
    <source>
        <dbReference type="SAM" id="MobiDB-lite"/>
    </source>
</evidence>
<organism>
    <name type="scientific">Pseudoalteromonas atlantica (strain T6c / ATCC BAA-1087)</name>
    <dbReference type="NCBI Taxonomy" id="3042615"/>
    <lineage>
        <taxon>Bacteria</taxon>
        <taxon>Pseudomonadati</taxon>
        <taxon>Pseudomonadota</taxon>
        <taxon>Gammaproteobacteria</taxon>
        <taxon>Alteromonadales</taxon>
        <taxon>Alteromonadaceae</taxon>
        <taxon>Paraglaciecola</taxon>
    </lineage>
</organism>
<sequence length="362" mass="40717">MKESVQRKLESLTERFEEVQALVSQPEIIADQDKYRALTKEYSQLEGVVKCFADYQGAQGDFESAQEMMQESDPEMREMAQEEYKSSKQAIEQYEDELQILLLPKDPNDESNCFIEIRAGAGGDEAAIFAGDLFRMYSRYAEARRWKVEVVTMNEGDHGGYKEVIANIIGDGAYGVLKFESGGHRVQRVPETESQGRIHTSACTVVVMPEVPESEAIEVNKADLKIDTFRASGAGGQHVNKTDSAIRITHVPSGIVVECQDERSQHKNRAKAMAVLQSRLNKLEEEKRQAEETSTRRNLVASGDRSERIRTYNFPQGRVTDHRINLTLYRLDDVVAGDLDAVLEPIRQEHQADLLASLSDEG</sequence>
<gene>
    <name evidence="1" type="primary">prfA</name>
    <name type="ordered locus">Patl_2563</name>
</gene>
<protein>
    <recommendedName>
        <fullName evidence="1">Peptide chain release factor 1</fullName>
        <shortName evidence="1">RF-1</shortName>
    </recommendedName>
</protein>
<feature type="chain" id="PRO_0000263319" description="Peptide chain release factor 1">
    <location>
        <begin position="1"/>
        <end position="362"/>
    </location>
</feature>
<feature type="region of interest" description="Disordered" evidence="2">
    <location>
        <begin position="284"/>
        <end position="304"/>
    </location>
</feature>
<feature type="compositionally biased region" description="Basic and acidic residues" evidence="2">
    <location>
        <begin position="284"/>
        <end position="295"/>
    </location>
</feature>
<feature type="modified residue" description="N5-methylglutamine" evidence="1">
    <location>
        <position position="237"/>
    </location>
</feature>
<reference key="1">
    <citation type="submission" date="2006-06" db="EMBL/GenBank/DDBJ databases">
        <title>Complete sequence of Pseudoalteromonas atlantica T6c.</title>
        <authorList>
            <consortium name="US DOE Joint Genome Institute"/>
            <person name="Copeland A."/>
            <person name="Lucas S."/>
            <person name="Lapidus A."/>
            <person name="Barry K."/>
            <person name="Detter J.C."/>
            <person name="Glavina del Rio T."/>
            <person name="Hammon N."/>
            <person name="Israni S."/>
            <person name="Dalin E."/>
            <person name="Tice H."/>
            <person name="Pitluck S."/>
            <person name="Saunders E."/>
            <person name="Brettin T."/>
            <person name="Bruce D."/>
            <person name="Han C."/>
            <person name="Tapia R."/>
            <person name="Gilna P."/>
            <person name="Schmutz J."/>
            <person name="Larimer F."/>
            <person name="Land M."/>
            <person name="Hauser L."/>
            <person name="Kyrpides N."/>
            <person name="Kim E."/>
            <person name="Karls A.C."/>
            <person name="Bartlett D."/>
            <person name="Higgins B.P."/>
            <person name="Richardson P."/>
        </authorList>
    </citation>
    <scope>NUCLEOTIDE SEQUENCE [LARGE SCALE GENOMIC DNA]</scope>
    <source>
        <strain>T6c / ATCC BAA-1087</strain>
    </source>
</reference>
<proteinExistence type="inferred from homology"/>
<accession>Q15SQ9</accession>
<comment type="function">
    <text evidence="1">Peptide chain release factor 1 directs the termination of translation in response to the peptide chain termination codons UAG and UAA.</text>
</comment>
<comment type="subcellular location">
    <subcellularLocation>
        <location evidence="1">Cytoplasm</location>
    </subcellularLocation>
</comment>
<comment type="PTM">
    <text evidence="1">Methylated by PrmC. Methylation increases the termination efficiency of RF1.</text>
</comment>
<comment type="similarity">
    <text evidence="1">Belongs to the prokaryotic/mitochondrial release factor family.</text>
</comment>
<name>RF1_PSEA6</name>
<dbReference type="EMBL" id="CP000388">
    <property type="protein sequence ID" value="ABG41079.1"/>
    <property type="molecule type" value="Genomic_DNA"/>
</dbReference>
<dbReference type="RefSeq" id="WP_006990506.1">
    <property type="nucleotide sequence ID" value="NC_008228.1"/>
</dbReference>
<dbReference type="SMR" id="Q15SQ9"/>
<dbReference type="STRING" id="342610.Patl_2563"/>
<dbReference type="KEGG" id="pat:Patl_2563"/>
<dbReference type="eggNOG" id="COG0216">
    <property type="taxonomic scope" value="Bacteria"/>
</dbReference>
<dbReference type="HOGENOM" id="CLU_036856_0_1_6"/>
<dbReference type="OrthoDB" id="9806673at2"/>
<dbReference type="Proteomes" id="UP000001981">
    <property type="component" value="Chromosome"/>
</dbReference>
<dbReference type="GO" id="GO:0005737">
    <property type="term" value="C:cytoplasm"/>
    <property type="evidence" value="ECO:0007669"/>
    <property type="project" value="UniProtKB-SubCell"/>
</dbReference>
<dbReference type="GO" id="GO:0016149">
    <property type="term" value="F:translation release factor activity, codon specific"/>
    <property type="evidence" value="ECO:0007669"/>
    <property type="project" value="UniProtKB-UniRule"/>
</dbReference>
<dbReference type="FunFam" id="3.30.160.20:FF:000004">
    <property type="entry name" value="Peptide chain release factor 1"/>
    <property type="match status" value="1"/>
</dbReference>
<dbReference type="FunFam" id="3.30.70.1660:FF:000002">
    <property type="entry name" value="Peptide chain release factor 1"/>
    <property type="match status" value="1"/>
</dbReference>
<dbReference type="FunFam" id="3.30.70.1660:FF:000004">
    <property type="entry name" value="Peptide chain release factor 1"/>
    <property type="match status" value="1"/>
</dbReference>
<dbReference type="Gene3D" id="3.30.160.20">
    <property type="match status" value="1"/>
</dbReference>
<dbReference type="Gene3D" id="3.30.70.1660">
    <property type="match status" value="1"/>
</dbReference>
<dbReference type="Gene3D" id="6.10.140.1950">
    <property type="match status" value="1"/>
</dbReference>
<dbReference type="HAMAP" id="MF_00093">
    <property type="entry name" value="Rel_fac_1"/>
    <property type="match status" value="1"/>
</dbReference>
<dbReference type="InterPro" id="IPR005139">
    <property type="entry name" value="PCRF"/>
</dbReference>
<dbReference type="InterPro" id="IPR000352">
    <property type="entry name" value="Pep_chain_release_fac_I"/>
</dbReference>
<dbReference type="InterPro" id="IPR045853">
    <property type="entry name" value="Pep_chain_release_fac_I_sf"/>
</dbReference>
<dbReference type="InterPro" id="IPR050057">
    <property type="entry name" value="Prokaryotic/Mito_RF"/>
</dbReference>
<dbReference type="InterPro" id="IPR004373">
    <property type="entry name" value="RF-1"/>
</dbReference>
<dbReference type="NCBIfam" id="TIGR00019">
    <property type="entry name" value="prfA"/>
    <property type="match status" value="1"/>
</dbReference>
<dbReference type="NCBIfam" id="NF001859">
    <property type="entry name" value="PRK00591.1"/>
    <property type="match status" value="1"/>
</dbReference>
<dbReference type="PANTHER" id="PTHR43804">
    <property type="entry name" value="LD18447P"/>
    <property type="match status" value="1"/>
</dbReference>
<dbReference type="PANTHER" id="PTHR43804:SF7">
    <property type="entry name" value="LD18447P"/>
    <property type="match status" value="1"/>
</dbReference>
<dbReference type="Pfam" id="PF03462">
    <property type="entry name" value="PCRF"/>
    <property type="match status" value="1"/>
</dbReference>
<dbReference type="Pfam" id="PF00472">
    <property type="entry name" value="RF-1"/>
    <property type="match status" value="1"/>
</dbReference>
<dbReference type="SMART" id="SM00937">
    <property type="entry name" value="PCRF"/>
    <property type="match status" value="1"/>
</dbReference>
<dbReference type="SUPFAM" id="SSF75620">
    <property type="entry name" value="Release factor"/>
    <property type="match status" value="1"/>
</dbReference>
<dbReference type="PROSITE" id="PS00745">
    <property type="entry name" value="RF_PROK_I"/>
    <property type="match status" value="1"/>
</dbReference>
<keyword id="KW-0963">Cytoplasm</keyword>
<keyword id="KW-0488">Methylation</keyword>
<keyword id="KW-0648">Protein biosynthesis</keyword>